<feature type="chain" id="PRO_0000324952" description="Protein SDS23">
    <location>
        <begin position="1"/>
        <end position="550"/>
    </location>
</feature>
<feature type="domain" description="CBS 1" evidence="2">
    <location>
        <begin position="227"/>
        <end position="288"/>
    </location>
</feature>
<feature type="domain" description="CBS 2" evidence="2">
    <location>
        <begin position="302"/>
        <end position="361"/>
    </location>
</feature>
<feature type="domain" description="CBS 3" evidence="2">
    <location>
        <begin position="374"/>
        <end position="431"/>
    </location>
</feature>
<feature type="domain" description="CBS 4" evidence="2">
    <location>
        <begin position="435"/>
        <end position="502"/>
    </location>
</feature>
<feature type="region of interest" description="Disordered" evidence="3">
    <location>
        <begin position="1"/>
        <end position="78"/>
    </location>
</feature>
<feature type="region of interest" description="Disordered" evidence="3">
    <location>
        <begin position="421"/>
        <end position="477"/>
    </location>
</feature>
<feature type="region of interest" description="Disordered" evidence="3">
    <location>
        <begin position="504"/>
        <end position="550"/>
    </location>
</feature>
<feature type="compositionally biased region" description="Polar residues" evidence="3">
    <location>
        <begin position="1"/>
        <end position="23"/>
    </location>
</feature>
<feature type="compositionally biased region" description="Low complexity" evidence="3">
    <location>
        <begin position="24"/>
        <end position="40"/>
    </location>
</feature>
<feature type="compositionally biased region" description="Low complexity" evidence="3">
    <location>
        <begin position="421"/>
        <end position="443"/>
    </location>
</feature>
<feature type="compositionally biased region" description="Polar residues" evidence="3">
    <location>
        <begin position="444"/>
        <end position="469"/>
    </location>
</feature>
<evidence type="ECO:0000250" key="1"/>
<evidence type="ECO:0000255" key="2">
    <source>
        <dbReference type="PROSITE-ProRule" id="PRU00703"/>
    </source>
</evidence>
<evidence type="ECO:0000256" key="3">
    <source>
        <dbReference type="SAM" id="MobiDB-lite"/>
    </source>
</evidence>
<evidence type="ECO:0000305" key="4"/>
<gene>
    <name type="primary">SDS23</name>
    <name type="ordered locus">DEHA2F03850g</name>
</gene>
<protein>
    <recommendedName>
        <fullName>Protein SDS23</fullName>
    </recommendedName>
</protein>
<organism>
    <name type="scientific">Debaryomyces hansenii (strain ATCC 36239 / CBS 767 / BCRC 21394 / JCM 1990 / NBRC 0083 / IGC 2968)</name>
    <name type="common">Yeast</name>
    <name type="synonym">Torulaspora hansenii</name>
    <dbReference type="NCBI Taxonomy" id="284592"/>
    <lineage>
        <taxon>Eukaryota</taxon>
        <taxon>Fungi</taxon>
        <taxon>Dikarya</taxon>
        <taxon>Ascomycota</taxon>
        <taxon>Saccharomycotina</taxon>
        <taxon>Pichiomycetes</taxon>
        <taxon>Debaryomycetaceae</taxon>
        <taxon>Debaryomyces</taxon>
    </lineage>
</organism>
<name>SDS23_DEBHA</name>
<dbReference type="EMBL" id="CR382138">
    <property type="protein sequence ID" value="CAG88848.2"/>
    <property type="molecule type" value="Genomic_DNA"/>
</dbReference>
<dbReference type="RefSeq" id="XP_460534.2">
    <property type="nucleotide sequence ID" value="XM_460534.1"/>
</dbReference>
<dbReference type="SMR" id="Q6BMN7"/>
<dbReference type="FunCoup" id="Q6BMN7">
    <property type="interactions" value="271"/>
</dbReference>
<dbReference type="STRING" id="284592.Q6BMN7"/>
<dbReference type="GeneID" id="2903439"/>
<dbReference type="KEGG" id="dha:DEHA2F03850g"/>
<dbReference type="VEuPathDB" id="FungiDB:DEHA2F03850g"/>
<dbReference type="eggNOG" id="KOG1764">
    <property type="taxonomic scope" value="Eukaryota"/>
</dbReference>
<dbReference type="HOGENOM" id="CLU_024459_1_0_1"/>
<dbReference type="InParanoid" id="Q6BMN7"/>
<dbReference type="OMA" id="MAPTNLC"/>
<dbReference type="OrthoDB" id="449052at2759"/>
<dbReference type="Proteomes" id="UP000000599">
    <property type="component" value="Chromosome F"/>
</dbReference>
<dbReference type="GO" id="GO:0005737">
    <property type="term" value="C:cytoplasm"/>
    <property type="evidence" value="ECO:0007669"/>
    <property type="project" value="UniProtKB-SubCell"/>
</dbReference>
<dbReference type="GO" id="GO:0005634">
    <property type="term" value="C:nucleus"/>
    <property type="evidence" value="ECO:0007669"/>
    <property type="project" value="UniProtKB-SubCell"/>
</dbReference>
<dbReference type="GO" id="GO:0004865">
    <property type="term" value="F:protein serine/threonine phosphatase inhibitor activity"/>
    <property type="evidence" value="ECO:0007669"/>
    <property type="project" value="TreeGrafter"/>
</dbReference>
<dbReference type="GO" id="GO:0042149">
    <property type="term" value="P:cellular response to glucose starvation"/>
    <property type="evidence" value="ECO:0007669"/>
    <property type="project" value="InterPro"/>
</dbReference>
<dbReference type="GO" id="GO:0030071">
    <property type="term" value="P:regulation of mitotic metaphase/anaphase transition"/>
    <property type="evidence" value="ECO:0007669"/>
    <property type="project" value="InterPro"/>
</dbReference>
<dbReference type="CDD" id="cd02205">
    <property type="entry name" value="CBS_pair_SF"/>
    <property type="match status" value="1"/>
</dbReference>
<dbReference type="Gene3D" id="3.10.580.10">
    <property type="entry name" value="CBS-domain"/>
    <property type="match status" value="2"/>
</dbReference>
<dbReference type="InterPro" id="IPR050511">
    <property type="entry name" value="AMPK_gamma/SDS23_families"/>
</dbReference>
<dbReference type="InterPro" id="IPR000644">
    <property type="entry name" value="CBS_dom"/>
</dbReference>
<dbReference type="InterPro" id="IPR046342">
    <property type="entry name" value="CBS_dom_sf"/>
</dbReference>
<dbReference type="InterPro" id="IPR016711">
    <property type="entry name" value="Ssd23"/>
</dbReference>
<dbReference type="PANTHER" id="PTHR13780">
    <property type="entry name" value="AMP-ACTIVATED PROTEIN KINASE, GAMMA REGULATORY SUBUNIT"/>
    <property type="match status" value="1"/>
</dbReference>
<dbReference type="PANTHER" id="PTHR13780:SF36">
    <property type="entry name" value="CBS DOMAIN-CONTAINING PROTEIN"/>
    <property type="match status" value="1"/>
</dbReference>
<dbReference type="Pfam" id="PF00571">
    <property type="entry name" value="CBS"/>
    <property type="match status" value="2"/>
</dbReference>
<dbReference type="PIRSF" id="PIRSF018148">
    <property type="entry name" value="UCP018148_CBS_YBR214w"/>
    <property type="match status" value="1"/>
</dbReference>
<dbReference type="SMART" id="SM00116">
    <property type="entry name" value="CBS"/>
    <property type="match status" value="3"/>
</dbReference>
<dbReference type="SUPFAM" id="SSF54631">
    <property type="entry name" value="CBS-domain pair"/>
    <property type="match status" value="2"/>
</dbReference>
<dbReference type="PROSITE" id="PS51371">
    <property type="entry name" value="CBS"/>
    <property type="match status" value="3"/>
</dbReference>
<reference key="1">
    <citation type="journal article" date="2004" name="Nature">
        <title>Genome evolution in yeasts.</title>
        <authorList>
            <person name="Dujon B."/>
            <person name="Sherman D."/>
            <person name="Fischer G."/>
            <person name="Durrens P."/>
            <person name="Casaregola S."/>
            <person name="Lafontaine I."/>
            <person name="de Montigny J."/>
            <person name="Marck C."/>
            <person name="Neuveglise C."/>
            <person name="Talla E."/>
            <person name="Goffard N."/>
            <person name="Frangeul L."/>
            <person name="Aigle M."/>
            <person name="Anthouard V."/>
            <person name="Babour A."/>
            <person name="Barbe V."/>
            <person name="Barnay S."/>
            <person name="Blanchin S."/>
            <person name="Beckerich J.-M."/>
            <person name="Beyne E."/>
            <person name="Bleykasten C."/>
            <person name="Boisrame A."/>
            <person name="Boyer J."/>
            <person name="Cattolico L."/>
            <person name="Confanioleri F."/>
            <person name="de Daruvar A."/>
            <person name="Despons L."/>
            <person name="Fabre E."/>
            <person name="Fairhead C."/>
            <person name="Ferry-Dumazet H."/>
            <person name="Groppi A."/>
            <person name="Hantraye F."/>
            <person name="Hennequin C."/>
            <person name="Jauniaux N."/>
            <person name="Joyet P."/>
            <person name="Kachouri R."/>
            <person name="Kerrest A."/>
            <person name="Koszul R."/>
            <person name="Lemaire M."/>
            <person name="Lesur I."/>
            <person name="Ma L."/>
            <person name="Muller H."/>
            <person name="Nicaud J.-M."/>
            <person name="Nikolski M."/>
            <person name="Oztas S."/>
            <person name="Ozier-Kalogeropoulos O."/>
            <person name="Pellenz S."/>
            <person name="Potier S."/>
            <person name="Richard G.-F."/>
            <person name="Straub M.-L."/>
            <person name="Suleau A."/>
            <person name="Swennen D."/>
            <person name="Tekaia F."/>
            <person name="Wesolowski-Louvel M."/>
            <person name="Westhof E."/>
            <person name="Wirth B."/>
            <person name="Zeniou-Meyer M."/>
            <person name="Zivanovic Y."/>
            <person name="Bolotin-Fukuhara M."/>
            <person name="Thierry A."/>
            <person name="Bouchier C."/>
            <person name="Caudron B."/>
            <person name="Scarpelli C."/>
            <person name="Gaillardin C."/>
            <person name="Weissenbach J."/>
            <person name="Wincker P."/>
            <person name="Souciet J.-L."/>
        </authorList>
    </citation>
    <scope>NUCLEOTIDE SEQUENCE [LARGE SCALE GENOMIC DNA]</scope>
    <source>
        <strain>ATCC 36239 / CBS 767 / BCRC 21394 / JCM 1990 / NBRC 0083 / IGC 2968</strain>
    </source>
</reference>
<sequence>MSNSFSFQRQNPGSPLQQHSPIHNINTGGNSNSVSNQSNNHPQTPGHHVPSRKPSIVEMLSSPPPLPNTPDQEDIHSFSLSRNTSVSSRASSIYGNVNGGTSKGSIVGVDWAEIPLVELTESNKLVSINSGFSVQKAFETLMEHNLTSVPVSLSKTDSTDLTNCLTFDYSDVNTYLLLIMNKINLNDLSIYEGGDDVLSNQQKDSITKSINKAKKGEEVPVDFIVKLHPKNPFVKFSEQDTLYKAMESLGNGVHRVAITNMNGTKITGILSQRRLIKYMWENARRFPSLDFYINSTLQDLKIGSNNPITIYEDQLLIEALLKMFTERVTSLAVVDKTMALIGNISIVDVKNVTSSKNSHLLFKSVLGFIGYNLTQKGIEEGQDQFPIFHVNNQSSLGRVIAKLVATKSHRLWVVENRGSVHHGSVSSTSSSNSNSNSKSVTQSPKASPSTIESTLNQSVSTPSNVQNIPPGSEPGGLPGKLVGVVTLTDILGLFASSKSNKKIDPQFARNQRRRSSTSTTRSSFEGSSAGQDLFRKSYTTSAPAKTEGKR</sequence>
<keyword id="KW-0129">CBS domain</keyword>
<keyword id="KW-0963">Cytoplasm</keyword>
<keyword id="KW-0539">Nucleus</keyword>
<keyword id="KW-1185">Reference proteome</keyword>
<keyword id="KW-0677">Repeat</keyword>
<proteinExistence type="inferred from homology"/>
<comment type="function">
    <text evidence="1">Involved in DNA replication and cell separation.</text>
</comment>
<comment type="subcellular location">
    <subcellularLocation>
        <location evidence="1">Cytoplasm</location>
    </subcellularLocation>
    <subcellularLocation>
        <location evidence="1">Nucleus</location>
    </subcellularLocation>
</comment>
<comment type="similarity">
    <text evidence="4">Belongs to the SDS23 family.</text>
</comment>
<accession>Q6BMN7</accession>